<gene>
    <name type="ORF">C02F5.5</name>
</gene>
<name>YKK5_CAEEL</name>
<feature type="chain" id="PRO_0000065110" description="Uncharacterized protein C02F5.5">
    <location>
        <begin position="1"/>
        <end position="173"/>
    </location>
</feature>
<protein>
    <recommendedName>
        <fullName>Uncharacterized protein C02F5.5</fullName>
    </recommendedName>
</protein>
<keyword id="KW-1185">Reference proteome</keyword>
<accession>P34282</accession>
<sequence>MSYMEQIPPYEYYKYVFGTRCAVLACSSFELMMVLLGSLGDSNVLAKLFYLVFLGASAAVSGFNLQQNIDGRDEIKKITGSGDNETRGKAAALVGIPALAAVFVFLCVSGHAFFSLFVLVHVLASIGQLGIEAYEVRNGFCIKAPENKKAVADSYDQNYQILNMVQDSVFDKK</sequence>
<dbReference type="EMBL" id="FO080288">
    <property type="protein sequence ID" value="CCD62629.1"/>
    <property type="molecule type" value="Genomic_DNA"/>
</dbReference>
<dbReference type="PIR" id="S44607">
    <property type="entry name" value="S44607"/>
</dbReference>
<dbReference type="RefSeq" id="NP_498802.1">
    <property type="nucleotide sequence ID" value="NM_066401.3"/>
</dbReference>
<dbReference type="BioGRID" id="46983">
    <property type="interactions" value="1"/>
</dbReference>
<dbReference type="FunCoup" id="P34282">
    <property type="interactions" value="278"/>
</dbReference>
<dbReference type="IntAct" id="P34282">
    <property type="interactions" value="1"/>
</dbReference>
<dbReference type="STRING" id="6239.C02F5.5.1"/>
<dbReference type="PaxDb" id="6239-C02F5.5"/>
<dbReference type="EnsemblMetazoa" id="C02F5.5.1">
    <property type="protein sequence ID" value="C02F5.5.1"/>
    <property type="gene ID" value="WBGene00015348"/>
</dbReference>
<dbReference type="GeneID" id="182122"/>
<dbReference type="KEGG" id="cel:CELE_C02F5.5"/>
<dbReference type="UCSC" id="C02F5.5">
    <property type="organism name" value="c. elegans"/>
</dbReference>
<dbReference type="AGR" id="WB:WBGene00015348"/>
<dbReference type="CTD" id="182122"/>
<dbReference type="WormBase" id="C02F5.5">
    <property type="protein sequence ID" value="CE00041"/>
    <property type="gene ID" value="WBGene00015348"/>
</dbReference>
<dbReference type="eggNOG" id="ENOG502TH9D">
    <property type="taxonomic scope" value="Eukaryota"/>
</dbReference>
<dbReference type="GeneTree" id="ENSGT00390000016837"/>
<dbReference type="HOGENOM" id="CLU_103079_0_0_1"/>
<dbReference type="InParanoid" id="P34282"/>
<dbReference type="OMA" id="PPYEYYK"/>
<dbReference type="OrthoDB" id="5813840at2759"/>
<dbReference type="PhylomeDB" id="P34282"/>
<dbReference type="PRO" id="PR:P34282"/>
<dbReference type="Proteomes" id="UP000001940">
    <property type="component" value="Chromosome III"/>
</dbReference>
<dbReference type="Bgee" id="WBGene00015348">
    <property type="expression patterns" value="Expressed in adult organism and 2 other cell types or tissues"/>
</dbReference>
<dbReference type="InterPro" id="IPR004296">
    <property type="entry name" value="DUF236"/>
</dbReference>
<dbReference type="InterPro" id="IPR055514">
    <property type="entry name" value="DUF7087"/>
</dbReference>
<dbReference type="PANTHER" id="PTHR36940">
    <property type="entry name" value="PROTEIN CBG20338"/>
    <property type="match status" value="1"/>
</dbReference>
<dbReference type="PANTHER" id="PTHR36940:SF3">
    <property type="entry name" value="PROTEIN CBG23643"/>
    <property type="match status" value="1"/>
</dbReference>
<dbReference type="Pfam" id="PF03057">
    <property type="entry name" value="DUF236"/>
    <property type="match status" value="1"/>
</dbReference>
<dbReference type="Pfam" id="PF23346">
    <property type="entry name" value="DUF7087"/>
    <property type="match status" value="1"/>
</dbReference>
<organism>
    <name type="scientific">Caenorhabditis elegans</name>
    <dbReference type="NCBI Taxonomy" id="6239"/>
    <lineage>
        <taxon>Eukaryota</taxon>
        <taxon>Metazoa</taxon>
        <taxon>Ecdysozoa</taxon>
        <taxon>Nematoda</taxon>
        <taxon>Chromadorea</taxon>
        <taxon>Rhabditida</taxon>
        <taxon>Rhabditina</taxon>
        <taxon>Rhabditomorpha</taxon>
        <taxon>Rhabditoidea</taxon>
        <taxon>Rhabditidae</taxon>
        <taxon>Peloderinae</taxon>
        <taxon>Caenorhabditis</taxon>
    </lineage>
</organism>
<reference key="1">
    <citation type="journal article" date="1994" name="Nature">
        <title>2.2 Mb of contiguous nucleotide sequence from chromosome III of C. elegans.</title>
        <authorList>
            <person name="Wilson R."/>
            <person name="Ainscough R."/>
            <person name="Anderson K."/>
            <person name="Baynes C."/>
            <person name="Berks M."/>
            <person name="Bonfield J."/>
            <person name="Burton J."/>
            <person name="Connell M."/>
            <person name="Copsey T."/>
            <person name="Cooper J."/>
            <person name="Coulson A."/>
            <person name="Craxton M."/>
            <person name="Dear S."/>
            <person name="Du Z."/>
            <person name="Durbin R."/>
            <person name="Favello A."/>
            <person name="Fraser A."/>
            <person name="Fulton L."/>
            <person name="Gardner A."/>
            <person name="Green P."/>
            <person name="Hawkins T."/>
            <person name="Hillier L."/>
            <person name="Jier M."/>
            <person name="Johnston L."/>
            <person name="Jones M."/>
            <person name="Kershaw J."/>
            <person name="Kirsten J."/>
            <person name="Laisster N."/>
            <person name="Latreille P."/>
            <person name="Lightning J."/>
            <person name="Lloyd C."/>
            <person name="Mortimore B."/>
            <person name="O'Callaghan M."/>
            <person name="Parsons J."/>
            <person name="Percy C."/>
            <person name="Rifken L."/>
            <person name="Roopra A."/>
            <person name="Saunders D."/>
            <person name="Shownkeen R."/>
            <person name="Sims M."/>
            <person name="Smaldon N."/>
            <person name="Smith A."/>
            <person name="Smith M."/>
            <person name="Sonnhammer E."/>
            <person name="Staden R."/>
            <person name="Sulston J."/>
            <person name="Thierry-Mieg J."/>
            <person name="Thomas K."/>
            <person name="Vaudin M."/>
            <person name="Vaughan K."/>
            <person name="Waterston R."/>
            <person name="Watson A."/>
            <person name="Weinstock L."/>
            <person name="Wilkinson-Sproat J."/>
            <person name="Wohldman P."/>
        </authorList>
    </citation>
    <scope>NUCLEOTIDE SEQUENCE [LARGE SCALE GENOMIC DNA]</scope>
    <source>
        <strain>Bristol N2</strain>
    </source>
</reference>
<reference key="2">
    <citation type="journal article" date="1998" name="Science">
        <title>Genome sequence of the nematode C. elegans: a platform for investigating biology.</title>
        <authorList>
            <consortium name="The C. elegans sequencing consortium"/>
        </authorList>
    </citation>
    <scope>NUCLEOTIDE SEQUENCE [LARGE SCALE GENOMIC DNA]</scope>
    <source>
        <strain>Bristol N2</strain>
    </source>
</reference>
<proteinExistence type="predicted"/>